<organism>
    <name type="scientific">Paramagnetospirillum magneticum (strain ATCC 700264 / AMB-1)</name>
    <name type="common">Magnetospirillum magneticum</name>
    <dbReference type="NCBI Taxonomy" id="342108"/>
    <lineage>
        <taxon>Bacteria</taxon>
        <taxon>Pseudomonadati</taxon>
        <taxon>Pseudomonadota</taxon>
        <taxon>Alphaproteobacteria</taxon>
        <taxon>Rhodospirillales</taxon>
        <taxon>Magnetospirillaceae</taxon>
        <taxon>Paramagnetospirillum</taxon>
    </lineage>
</organism>
<comment type="function">
    <text evidence="2 5 6 9 11 18 19 20 21 23">Promotes the formation of magnetite in Fe(2+)-rich conditions, when magnetite is not readily formed (PubMed:27112228). Binds Fe(3+) and Fe(2+) (Probable) (PubMed:12496282, PubMed:23857056, PubMed:27112228). May play a role in nucleation of magnetite crystal formation (Probable) (PubMed:22716969). May help control production of crystals with a specific morphology (Probable) (PubMed:22716969, PubMed:27759096). Greatly improves the formation of magnetosome-like magnetite crystals in vitro (PubMed:12496282). Isolated short protein, probably residues 75-133, binds up to 18 Fe(3+) per monomer and self-assembles into micelles about 21-26 nm in diameter; the C-terminal 21 residues also self-assemble (PubMed:23857056).</text>
</comment>
<comment type="subunit">
    <text evidence="13">Full length protein oligomerizes (PubMed:28955887). Full-length protein interacts with MamA (PubMed:28955887).</text>
</comment>
<comment type="subcellular location">
    <subcellularLocation>
        <location evidence="2 3 11 13">Magnetosome membrane</location>
        <topology evidence="1">Single-pass membrane protein</topology>
    </subcellularLocation>
    <text evidence="2 10 22">Tightly associated with magnetite crystals (PubMed:12496282). Tagged protein forms straight lines with a punctate pattern extending along most of the cell associated with its inner curvature, in the correct position to be associated with magnetosomes. Under aerobic conditions, when magnetites cannot form, or in the absence of iron, the protein is dispersed in the cell, probably in the inner membrane; as magnetosomes form tagged Mms6 localizes in a line that corresponds to the position of magnetite crystals (PubMed:27481925). Short protein seems to localize specifically to magnetosomes which have magnetite crystals (Probable).</text>
</comment>
<comment type="domain">
    <text evidence="2 6 9 10 15">Fe(3+) binding by the shorter form (residues 75-133) is inhibited by Ca(2+) and Mg(2+) (PubMed:12496282). The C-terminal 21 residues (magnetite-interacting component, MIC, residues 112-133) self assemble into multimers up to octamers; this fragment binds Fe(3+) which alters its structure (PubMed:23857056). Another paper showed binding of MIC to Fe(2+) via Asp-123, Glu-124, Glu-125, and Glu-127 with a minor contribution from Glu-118 (PubMed:27112228). The isolated lumenal MIC binds Fe(2+) and Ni(2+), Ni(2+)-binding may not be physiological; in this paper binding to Fe(3+) was poor. Although it binds iron the protein fragment has no effect on magnetite crystal formation in an iron co-precipitation experiment, however mutating some of its residues decreases crystal size (PubMed:30405554). Correct subcellular location to the magnetosomes requires the N-terminal 75 residues (PubMed:27481925).</text>
</comment>
<comment type="PTM">
    <text evidence="13 18">Seen in gels as a band of about 6 kDa which has residue 75 as its N-terminus, suggesting it may undergo cleavage (Probable). 2 forms, a full-length and the shorter protein are both detected immunologically in magnetosomes (PubMed:28955887).</text>
</comment>
<comment type="disruption phenotype">
    <text evidence="4 5 7 11">No effect on bacterial growth. Magnetosomes are wild-type in number and size, but slightly less regularly spaced. Magnetite crystals are smaller, irregularly shaped instead of cubooctahedral, crystal growth may be incomplete. Magnetite-associated proteins Mms5, MamC and MamD levels are significantly decreased (PubMed:21169637). Single non-polar gene mutation has a slightly reduced magnetic response, crystals are smaller and elongated (PubMed:22716969, PubMed:27759096). Magnetite crystals are elongated and their surface structure is altered, iron uptake is wild-type (PubMed:24961165). Deletion of the probable mms6 operon (amb0955, mms6 and mmsF) leads to weak magnetic response and much smaller, elongated magnetite crystals (PubMed:22716969).</text>
</comment>
<comment type="biotechnology">
    <text evidence="12">Transfection of a codon optimized gene into human adipose-derived stem cells yields cells with magnetic crystals; the crystals do not have a noticeable effect on cell proliferation, migration or differentiation.</text>
</comment>
<comment type="biotechnology">
    <text evidence="14">A fusion of MIC to barstar (an RNase inhibitor from B.amyloliquefaciens) binds and stabilizes coprecipitated magnetite nanoparticles for at least 2 months. Cells transfected with barnase (the ribonuclease target of barstar) can be specifically targeted by magnetite-bound barstar which could be used in cell-specific cancer treatment.</text>
</comment>
<comment type="miscellaneous">
    <text evidence="17">This bacteria makes up to 20 cubo-octahedral magnetosomes of about 45 nm in diameter which contain membrane-bound crystals of magnetite (Fe(3)O(4)).</text>
</comment>
<comment type="similarity">
    <text evidence="17">Belongs to the magnetosome Mms6 family.</text>
</comment>
<comment type="caution">
    <text evidence="19">PMID:21169637 identified the deleted gene as YP_420381.1 (equivalent to amb1018, mamY), which does not correspond to either the gene or protein sequenced by the same authors. It is not clear which gene was really deleted.</text>
</comment>
<comment type="sequence caution" evidence="17">
    <conflict type="erroneous initiation">
        <sequence resource="EMBL-CDS" id="BAE49760"/>
    </conflict>
    <text>Extended N-terminus.</text>
</comment>
<protein>
    <recommendedName>
        <fullName evidence="16">Magnetite biomineralization protein Mms6</fullName>
    </recommendedName>
    <alternativeName>
        <fullName evidence="17">Magnetosome protein Mms6</fullName>
    </alternativeName>
</protein>
<keyword id="KW-0091">Biomineralization</keyword>
<keyword id="KW-0903">Direct protein sequencing</keyword>
<keyword id="KW-0408">Iron</keyword>
<keyword id="KW-1281">Magnetosome</keyword>
<keyword id="KW-0472">Membrane</keyword>
<keyword id="KW-0479">Metal-binding</keyword>
<keyword id="KW-0812">Transmembrane</keyword>
<keyword id="KW-1133">Transmembrane helix</keyword>
<feature type="chain" id="PRO_0000447815" description="Magnetite biomineralization protein Mms6">
    <location>
        <begin position="1"/>
        <end position="133"/>
    </location>
</feature>
<feature type="topological domain" description="Cytoplasmic" evidence="17">
    <location>
        <begin position="1"/>
        <end position="82"/>
    </location>
</feature>
<feature type="transmembrane region" description="Helical" evidence="1">
    <location>
        <begin position="83"/>
        <end position="103"/>
    </location>
</feature>
<feature type="topological domain" description="Lumenal" evidence="17">
    <location>
        <begin position="104"/>
        <end position="133"/>
    </location>
</feature>
<feature type="region of interest" description="Required for localization to magnetosomes" evidence="10">
    <location>
        <begin position="1"/>
        <end position="75"/>
    </location>
</feature>
<feature type="region of interest" description="GL repeat" evidence="17">
    <location>
        <begin position="83"/>
        <end position="92"/>
    </location>
</feature>
<feature type="region of interest" description="MIC, self-assembles, binds magnetite, Fe(2+) and Fe(3+)" evidence="6 8 9 15">
    <location>
        <begin position="112"/>
        <end position="133"/>
    </location>
</feature>
<feature type="mutagenesis site" description="Self-assembly of the mature protein is reduced." evidence="6">
    <original>W</original>
    <variation>A</variation>
    <location>
        <position position="79"/>
    </location>
</feature>
<feature type="mutagenesis site" description="No change in self-assembly of the mature protein." evidence="6">
    <original>W</original>
    <variation>F</variation>
    <location>
        <position position="79"/>
    </location>
</feature>
<feature type="mutagenesis site" description="Makes rod shaped crystals; protein not in magnetosome membranes." evidence="11">
    <location>
        <begin position="83"/>
        <end position="93"/>
    </location>
</feature>
<feature type="mutagenesis site" description="Self-assembly of the mature protein is reduced." evidence="6">
    <original>LGLGLGLGL</original>
    <variation>AGAGAGAGA</variation>
    <location>
        <begin position="84"/>
        <end position="92"/>
    </location>
</feature>
<feature type="mutagenesis site" description="Makes rod shaped crystals." evidence="11">
    <location>
        <begin position="94"/>
        <end position="112"/>
    </location>
</feature>
<feature type="mutagenesis site" description="Self-assembly of the mature protein is reduced." evidence="6">
    <original>W</original>
    <variation>A</variation>
    <location>
        <position position="95"/>
    </location>
</feature>
<feature type="mutagenesis site" description="No change in self-assembly of the mature protein." evidence="6">
    <original>W</original>
    <variation>F</variation>
    <location>
        <position position="95"/>
    </location>
</feature>
<feature type="mutagenesis site" description="Self-assembly of the mature protein is reduced; isolated peptide does not bind Fe(3+)." evidence="6">
    <original>KSRDIESAQSDEEVELRDALA</original>
    <variation>QSLERAEDEDADISAVEKLSR</variation>
    <location>
        <begin position="113"/>
        <end position="133"/>
    </location>
</feature>
<feature type="mutagenesis site" description="Makes rod shaped crystals; protein not in magnetosome membranes." evidence="11">
    <location>
        <begin position="113"/>
        <end position="133"/>
    </location>
</feature>
<feature type="mutagenesis site" description="Self-assembly of the mature protein is reduced; no longer binds Fe(3+)." evidence="6">
    <original>SRDIESAQSDEEVELRD</original>
    <variation>DRSIDEAQESDSVELRE</variation>
    <location>
        <begin position="114"/>
        <end position="130"/>
    </location>
</feature>
<feature type="mutagenesis site" description="Makes rod shaped crystals." evidence="11">
    <original>DIESAQSDEEVELRD</original>
    <variation>KIKSAQSKKKVKLKRK</variation>
    <location>
        <begin position="116"/>
        <end position="130"/>
    </location>
</feature>
<feature type="mutagenesis site" description="Makes wild-type crystals; protein is in magnetosome membrane." evidence="11">
    <original>D</original>
    <variation>A</variation>
    <location>
        <position position="116"/>
    </location>
</feature>
<feature type="mutagenesis site" description="No change in self-assembly of the mature protein." evidence="6">
    <original>I</original>
    <variation>G</variation>
    <location>
        <position position="117"/>
    </location>
</feature>
<feature type="mutagenesis site" description="Makes wild-type crystals; protein is in magnetosome membrane." evidence="11">
    <original>E</original>
    <variation>A</variation>
    <location>
        <position position="118"/>
    </location>
</feature>
<feature type="mutagenesis site" description="Makes wild-type crystals; protein is in magnetosome membrane." evidence="11">
    <original>S</original>
    <variation>A</variation>
    <location>
        <position position="122"/>
    </location>
</feature>
<feature type="mutagenesis site" description="Makes rod shaped crystals." evidence="11">
    <location>
        <begin position="123"/>
        <end position="133"/>
    </location>
</feature>
<feature type="mutagenesis site" description="Isolated MIC makes smaller magnetite crystals." evidence="15">
    <original>DE</original>
    <variation>AA</variation>
    <location>
        <begin position="123"/>
        <end position="124"/>
    </location>
</feature>
<feature type="mutagenesis site" description="Makes rod shaped crystals; protein is in magnetosome membrane. Isolated MIC makes slightly smaller magnetite crystals." evidence="11 15">
    <original>D</original>
    <variation>A</variation>
    <location>
        <position position="123"/>
    </location>
</feature>
<feature type="mutagenesis site" description="Makes rod shaped crystals; protein is in magnetosome membrane. Isolated MIC makes wild-type size magnetite crystals." evidence="11 15">
    <original>E</original>
    <variation>A</variation>
    <location>
        <position position="124"/>
    </location>
</feature>
<feature type="mutagenesis site" description="Makes rod shaped crystals; protein is in magnetosome membrane." evidence="11">
    <original>E</original>
    <variation>A</variation>
    <location>
        <position position="125"/>
    </location>
</feature>
<feature type="mutagenesis site" description="Makes wild-type crystals; protein is in magnetosome membrane." evidence="11">
    <original>E</original>
    <variation>A</variation>
    <location>
        <position position="127"/>
    </location>
</feature>
<feature type="mutagenesis site" description="Self-assembly of the mature protein is reduced." evidence="6">
    <original>L</original>
    <variation>G</variation>
    <location>
        <position position="128"/>
    </location>
</feature>
<feature type="mutagenesis site" description="Makes wild-type crystals; protein is in magnetosome membrane." evidence="11">
    <original>D</original>
    <variation>A</variation>
    <location>
        <position position="130"/>
    </location>
</feature>
<feature type="mutagenesis site" description="Mature protein forms a lattice." evidence="6">
    <original>A</original>
    <variation>C</variation>
    <location>
        <position position="131"/>
    </location>
</feature>
<feature type="mutagenesis site" description="Self-assembly of the mature protein is significantly reduced." evidence="6">
    <original>L</original>
    <variation>G</variation>
    <location>
        <position position="132"/>
    </location>
</feature>
<feature type="mutagenesis site" description="Mature protein forms worm-like structures and spheres." evidence="6">
    <original>A</original>
    <variation>C</variation>
    <location>
        <position position="133"/>
    </location>
</feature>
<accession>Q2W8R5</accession>
<accession>Q83VL7</accession>
<dbReference type="EMBL" id="AB096081">
    <property type="protein sequence ID" value="BAC65162.1"/>
    <property type="molecule type" value="Genomic_DNA"/>
</dbReference>
<dbReference type="EMBL" id="AP007255">
    <property type="protein sequence ID" value="BAE49760.1"/>
    <property type="status" value="ALT_INIT"/>
    <property type="molecule type" value="Genomic_DNA"/>
</dbReference>
<dbReference type="STRING" id="342108.amb0956"/>
<dbReference type="KEGG" id="mag:amb0956"/>
<dbReference type="HOGENOM" id="CLU_1675763_0_0_5"/>
<dbReference type="Proteomes" id="UP000007058">
    <property type="component" value="Chromosome"/>
</dbReference>
<dbReference type="GO" id="GO:0110146">
    <property type="term" value="C:magnetosome membrane"/>
    <property type="evidence" value="ECO:0000314"/>
    <property type="project" value="UniProtKB"/>
</dbReference>
<dbReference type="GO" id="GO:0046872">
    <property type="term" value="F:metal ion binding"/>
    <property type="evidence" value="ECO:0007669"/>
    <property type="project" value="UniProtKB-KW"/>
</dbReference>
<dbReference type="InterPro" id="IPR053517">
    <property type="entry name" value="Magnetite_Biomin-Domain"/>
</dbReference>
<dbReference type="NCBIfam" id="NF040917">
    <property type="entry name" value="Mms6"/>
    <property type="match status" value="1"/>
</dbReference>
<name>MMS6_PARM1</name>
<sequence length="133" mass="12531">MGEMEREGAAAKAGAAKTGAAKTGTVAKTGIAAKTGVATAVAAPAAPANVAAAQGAGTKVALGAGKAAAGAKVVGGTIWTGKGLGLGLGLGLGAWGPIILGVVGAGAVYAYMKSRDIESAQSDEEVELRDALA</sequence>
<gene>
    <name type="primary">mms6</name>
    <name type="ordered locus">amb0956</name>
</gene>
<evidence type="ECO:0000255" key="1"/>
<evidence type="ECO:0000269" key="2">
    <source>
    </source>
</evidence>
<evidence type="ECO:0000269" key="3">
    <source>
    </source>
</evidence>
<evidence type="ECO:0000269" key="4">
    <source>
    </source>
</evidence>
<evidence type="ECO:0000269" key="5">
    <source>
    </source>
</evidence>
<evidence type="ECO:0000269" key="6">
    <source>
    </source>
</evidence>
<evidence type="ECO:0000269" key="7">
    <source>
    </source>
</evidence>
<evidence type="ECO:0000269" key="8">
    <source>
    </source>
</evidence>
<evidence type="ECO:0000269" key="9">
    <source>
    </source>
</evidence>
<evidence type="ECO:0000269" key="10">
    <source>
    </source>
</evidence>
<evidence type="ECO:0000269" key="11">
    <source>
    </source>
</evidence>
<evidence type="ECO:0000269" key="12">
    <source>
    </source>
</evidence>
<evidence type="ECO:0000269" key="13">
    <source>
    </source>
</evidence>
<evidence type="ECO:0000269" key="14">
    <source>
    </source>
</evidence>
<evidence type="ECO:0000269" key="15">
    <source>
    </source>
</evidence>
<evidence type="ECO:0000303" key="16">
    <source>
    </source>
</evidence>
<evidence type="ECO:0000305" key="17"/>
<evidence type="ECO:0000305" key="18">
    <source>
    </source>
</evidence>
<evidence type="ECO:0000305" key="19">
    <source>
    </source>
</evidence>
<evidence type="ECO:0000305" key="20">
    <source>
    </source>
</evidence>
<evidence type="ECO:0000305" key="21">
    <source>
    </source>
</evidence>
<evidence type="ECO:0000305" key="22">
    <source>
    </source>
</evidence>
<evidence type="ECO:0000305" key="23">
    <source>
    </source>
</evidence>
<reference key="1">
    <citation type="journal article" date="2003" name="J. Biol. Chem.">
        <title>A novel protein tightly bound to bacterial magnetic particles in Magnetospirillum magneticum strain AMB-1.</title>
        <authorList>
            <person name="Arakaki A."/>
            <person name="Webb J."/>
            <person name="Matsunaga T."/>
        </authorList>
    </citation>
    <scope>NUCLEOTIDE SEQUENCE [GENOMIC DNA]</scope>
    <scope>PROTEIN SEQUENCE OF 75-110</scope>
    <scope>FUNCTION</scope>
    <scope>SUBCELLULAR LOCATION</scope>
    <scope>POSSIBLE PROTEOLYSIS</scope>
    <scope>FE(3+)-BINDING</scope>
    <source>
        <strain>ATCC 700264 / AMB-1</strain>
    </source>
</reference>
<reference key="2">
    <citation type="journal article" date="2005" name="DNA Res.">
        <title>Complete genome sequence of the facultative anaerobic magnetotactic bacterium Magnetospirillum sp. strain AMB-1.</title>
        <authorList>
            <person name="Matsunaga T."/>
            <person name="Okamura Y."/>
            <person name="Fukuda Y."/>
            <person name="Wahyudi A.T."/>
            <person name="Murase Y."/>
            <person name="Takeyama H."/>
        </authorList>
    </citation>
    <scope>NUCLEOTIDE SEQUENCE [LARGE SCALE GENOMIC DNA]</scope>
    <scope>SUBCELLULAR LOCATION</scope>
    <source>
        <strain>ATCC 700264 / AMB-1</strain>
    </source>
</reference>
<reference key="3">
    <citation type="journal article" date="2011" name="J. Biol. Chem.">
        <title>MMS6 protein regulates crystal morphology during nano-sized magnetite biomineralization in vivo.</title>
        <authorList>
            <person name="Tanaka M."/>
            <person name="Mazuyama E."/>
            <person name="Arakaki A."/>
            <person name="Matsunaga T."/>
        </authorList>
    </citation>
    <scope>FUNCTION</scope>
    <scope>DISRUPTION PHENOTYPE</scope>
    <source>
        <strain>ATCC 700264 / AMB-1</strain>
    </source>
</reference>
<reference key="4">
    <citation type="journal article" date="2012" name="Mol. Microbiol.">
        <title>The magnetosome membrane protein, MmsF, is a major regulator of magnetite biomineralization in Magnetospirillum magneticum AMB-1.</title>
        <authorList>
            <person name="Murat D."/>
            <person name="Falahati V."/>
            <person name="Bertinetti L."/>
            <person name="Csencsits R."/>
            <person name="Koernig A."/>
            <person name="Downing K."/>
            <person name="Faivre D."/>
            <person name="Komeili A."/>
        </authorList>
    </citation>
    <scope>FUNCTION</scope>
    <scope>DISRUPTION PHENOTYPE</scope>
    <source>
        <strain>ATCC 700264 / AMB-1</strain>
    </source>
</reference>
<reference key="5">
    <citation type="journal article" date="2013" name="Int. J. Mol. Sci.">
        <title>Integrated self-assembly of the Mms6 magnetosome protein to form an iron-responsive structure.</title>
        <authorList>
            <person name="Feng S."/>
            <person name="Wang L."/>
            <person name="Palo P."/>
            <person name="Liu X."/>
            <person name="Mallapragada S.K."/>
            <person name="Nilsen-Hamilton M."/>
        </authorList>
    </citation>
    <scope>FUNCTION</scope>
    <scope>SELF-ASSEMBLY</scope>
    <scope>DOMAIN</scope>
    <scope>FE(3+)-BINDING</scope>
    <scope>MUTAGENESIS OF TRP-79; 84-LEU--LEU-92; TRP-95; 113-LYS--ALA-133; 114-SER--ASP-130; ILE-117; LEU-128; ALA-131; LEU-132 AND ALA-133</scope>
    <source>
        <strain>ATCC 700264 / AMB-1</strain>
    </source>
</reference>
<reference key="6">
    <citation type="journal article" date="2014" name="Mol. Microbiol.">
        <title>Co-ordinated functions of Mms proteins define the surface structure of cubo-octahedral magnetite crystals in magnetotactic bacteria.</title>
        <authorList>
            <person name="Arakaki A."/>
            <person name="Yamagishi A."/>
            <person name="Fukuyo A."/>
            <person name="Tanaka M."/>
            <person name="Matsunaga T."/>
        </authorList>
    </citation>
    <scope>DISRUPTION PHENOTYPE</scope>
    <source>
        <strain>ATCC 700264 / AMB-1</strain>
    </source>
</reference>
<reference key="7">
    <citation type="journal article" date="2016" name="J. Bacteriol.">
        <title>Comparative subcellular localization analysis of magnetosome proteins reveals a unique localization behavior of Mms6 protein onto magnetite crystals.</title>
        <authorList>
            <person name="Arakaki A."/>
            <person name="Kikuchi D."/>
            <person name="Tanaka M."/>
            <person name="Yamagishi A."/>
            <person name="Yoda T."/>
            <person name="Matsunaga T."/>
        </authorList>
    </citation>
    <scope>FUNCTION</scope>
    <scope>SUBCELLULAR LOCATION</scope>
    <scope>DOMAIN</scope>
    <source>
        <strain>ATCC 700264 / AMB-1</strain>
    </source>
</reference>
<reference key="8">
    <citation type="journal article" date="2016" name="Biochem. Biophys. Rep.">
        <title>A protein-protein interaction in magnetosomes: TPR protein MamA interacts with an Mms6 protein.</title>
        <authorList>
            <person name="Nguyen H.V."/>
            <person name="Suzuki E."/>
            <person name="Oestreicher Z."/>
            <person name="Minamide H."/>
            <person name="Endoh H."/>
            <person name="Fukumori Y."/>
            <person name="Taoka A."/>
        </authorList>
    </citation>
    <scope>2 FORMS EXIST IN MAGNETOSOMES</scope>
    <scope>INTERACTION WITH MAMA</scope>
    <scope>SUBCELLULAR LOCATION</scope>
    <source>
        <strain>ATCC 700264 / AMB-1</strain>
    </source>
</reference>
<reference key="9">
    <citation type="journal article" date="2016" name="Chemistry">
        <title>Ferrous Iron Binding Key to Mms6 Magnetite Biomineralisation: A Mechanistic Study to understand Magnetite Formation Using pH Titration and NMR Spectroscopy.</title>
        <authorList>
            <person name="Rawlings A.E."/>
            <person name="Bramble J.P."/>
            <person name="Hounslow A.M."/>
            <person name="Williamson M.P."/>
            <person name="Monnington A.E."/>
            <person name="Cooke D.J."/>
            <person name="Staniland S.S."/>
        </authorList>
    </citation>
    <scope>FUNCTION</scope>
    <scope>FE(2+)-BINDING</scope>
    <scope>DOMAIN</scope>
    <source>
        <strain>ATCC 700264 / AMB-1</strain>
    </source>
</reference>
<reference key="10">
    <citation type="journal article" date="2016" name="J. Struct. Biol.">
        <title>Structure-function studies of the magnetite-biomineralizing magnetosome-associated protein MamC.</title>
        <authorList>
            <person name="Nudelman H."/>
            <person name="Tercedor C.V."/>
            <person name="Kolusheva S."/>
            <person name="Gonzalez T.P."/>
            <person name="Widdrat M."/>
            <person name="Grimberg N."/>
            <person name="Levi H."/>
            <person name="Nelkenbaum O."/>
            <person name="Davidov G."/>
            <person name="Faivre D."/>
            <person name="Jimenez-Lopez C."/>
            <person name="Zarivach R."/>
        </authorList>
    </citation>
    <scope>FUNCTION</scope>
    <scope>DOMAIN</scope>
    <scope>MAGNETITE-BINDING</scope>
    <source>
        <strain>ATCC 700264 / AMB-1</strain>
    </source>
</reference>
<reference key="11">
    <citation type="journal article" date="2016" name="RSC Adv.">
        <title>Using a biomimetic membrane surface experiment to investigate the activity of the magnetite biomineralisation protein Mms6.</title>
        <authorList>
            <person name="Bird S.M."/>
            <person name="Rawlings A.E."/>
            <person name="Galloway J.M."/>
            <person name="Staniland S.S."/>
        </authorList>
    </citation>
    <scope>FUNCTION</scope>
    <source>
        <strain>ATCC 700264 / AMB-1</strain>
    </source>
</reference>
<reference key="12">
    <citation type="journal article" date="2016" name="Sci. Rep.">
        <title>Core amino acid residues in the morphology-regulating protein, Mms6, for intracellular magnetite biomineralization.</title>
        <authorList>
            <person name="Yamagishi A."/>
            <person name="Narumiya K."/>
            <person name="Tanaka M."/>
            <person name="Matsunaga T."/>
            <person name="Arakaki A."/>
        </authorList>
    </citation>
    <scope>FUNCTION</scope>
    <scope>SUBCELLULAR LOCATION</scope>
    <scope>DISRUPTION PHENOTYPE</scope>
    <scope>MUTAGENESIS OF 83-GLY--GLY-93; 94-ALA--MET-112; 113-ARG--ALA-133; 116-ASP--ASP-130; ASP-116; GLU-118; 123-ASP--ALA-133; SER-122; GLU-127 AND ASP-130</scope>
    <source>
        <strain>ATCC 700264 / AMB-1</strain>
    </source>
</reference>
<reference key="13">
    <citation type="journal article" date="2017" name="Sci. Rep.">
        <title>Biosynthesis of magnetic nanoparticles by human mesenchymal stem cells following transfection with the magnetotactic bacterial gene mms6.</title>
        <authorList>
            <person name="Elfick A."/>
            <person name="Rischitor G."/>
            <person name="Mouras R."/>
            <person name="Azfer A."/>
            <person name="Lungaro L."/>
            <person name="Uhlarz M."/>
            <person name="Herrmannsdoerfer T."/>
            <person name="Lucocq J."/>
            <person name="Gamal W."/>
            <person name="Bagnaninchi P."/>
            <person name="Semple S."/>
            <person name="Salter D.M."/>
        </authorList>
    </citation>
    <scope>BIOTECHNOLOGY</scope>
    <source>
        <strain>ATCC 700264 / AMB-1</strain>
    </source>
</reference>
<reference key="14">
    <citation type="journal article" date="2018" name="Dokl. Biochem. Biophys.">
        <title>Synthesis of Magnetic Nanoparticles Stabilized by Magnetite-Binding Protein for Targeted Delivery to Cancer Cells.</title>
        <authorList>
            <person name="Kotelnikova P.A."/>
            <person name="Shipunova V.O."/>
            <person name="Aghayeva U.F."/>
            <person name="Stremovskiy O.A."/>
            <person name="Nikitin M.P."/>
            <person name="Novikov I.A."/>
            <person name="Schulga A.A."/>
            <person name="Deyev S.M."/>
            <person name="Petrov R.V."/>
        </authorList>
    </citation>
    <scope>BIOTECHNOLOGY</scope>
    <source>
        <strain>ATCC 700264 / AMB-1</strain>
    </source>
</reference>
<reference key="15">
    <citation type="journal article" date="2018" name="Front. Microbiol.">
        <title>Understanding the biomineralization role of magnetite-interacting components (MICs) from magnetotactic bacteria.</title>
        <authorList>
            <person name="Nudelman H."/>
            <person name="Lee Y.Z."/>
            <person name="Hung Y.L."/>
            <person name="Kolusheva S."/>
            <person name="Upcher A."/>
            <person name="Chen Y.C."/>
            <person name="Chen J.Y."/>
            <person name="Sue S.C."/>
            <person name="Zarivach R."/>
        </authorList>
    </citation>
    <scope>FUNCTION</scope>
    <scope>FE(2+)-BINDING</scope>
    <scope>DOMAIN</scope>
    <scope>MUTAGENESIS OF 123-ASP-GLU-124; ASP-123 AND GLU-124</scope>
    <source>
        <strain>ATCC 700264 / AMB-1</strain>
    </source>
</reference>
<proteinExistence type="evidence at protein level"/>